<keyword id="KW-0106">Calcium</keyword>
<keyword id="KW-0903">Direct protein sequencing</keyword>
<keyword id="KW-0325">Glycoprotein</keyword>
<keyword id="KW-0430">Lectin</keyword>
<keyword id="KW-0464">Manganese</keyword>
<keyword id="KW-0479">Metal-binding</keyword>
<comment type="function">
    <text>Di-N-acetylchitobiose specific lectin.</text>
</comment>
<comment type="similarity">
    <text evidence="3">Belongs to the leguminous lectin family.</text>
</comment>
<dbReference type="PIR" id="S16964">
    <property type="entry name" value="S16964"/>
</dbReference>
<dbReference type="SMR" id="P23558"/>
<dbReference type="iPTMnet" id="P23558"/>
<dbReference type="GO" id="GO:0030246">
    <property type="term" value="F:carbohydrate binding"/>
    <property type="evidence" value="ECO:0007669"/>
    <property type="project" value="UniProtKB-KW"/>
</dbReference>
<dbReference type="GO" id="GO:0046872">
    <property type="term" value="F:metal ion binding"/>
    <property type="evidence" value="ECO:0007669"/>
    <property type="project" value="UniProtKB-KW"/>
</dbReference>
<dbReference type="CDD" id="cd06899">
    <property type="entry name" value="lectin_legume_LecRK_Arcelin_ConA"/>
    <property type="match status" value="1"/>
</dbReference>
<dbReference type="Gene3D" id="2.60.120.200">
    <property type="match status" value="1"/>
</dbReference>
<dbReference type="InterPro" id="IPR013320">
    <property type="entry name" value="ConA-like_dom_sf"/>
</dbReference>
<dbReference type="InterPro" id="IPR016363">
    <property type="entry name" value="L-lectin"/>
</dbReference>
<dbReference type="InterPro" id="IPR000985">
    <property type="entry name" value="Lectin_LegA_CS"/>
</dbReference>
<dbReference type="InterPro" id="IPR019825">
    <property type="entry name" value="Lectin_legB_Mn/Ca_BS"/>
</dbReference>
<dbReference type="InterPro" id="IPR001220">
    <property type="entry name" value="Legume_lectin_dom"/>
</dbReference>
<dbReference type="InterPro" id="IPR050258">
    <property type="entry name" value="Leguminous_Lectin"/>
</dbReference>
<dbReference type="PANTHER" id="PTHR32401">
    <property type="entry name" value="CONCANAVALIN A-LIKE LECTIN FAMILY PROTEIN"/>
    <property type="match status" value="1"/>
</dbReference>
<dbReference type="PANTHER" id="PTHR32401:SF45">
    <property type="entry name" value="LECTIN"/>
    <property type="match status" value="1"/>
</dbReference>
<dbReference type="Pfam" id="PF00139">
    <property type="entry name" value="Lectin_legB"/>
    <property type="match status" value="1"/>
</dbReference>
<dbReference type="PIRSF" id="PIRSF002690">
    <property type="entry name" value="L-type_lectin_plant"/>
    <property type="match status" value="1"/>
</dbReference>
<dbReference type="SUPFAM" id="SSF49899">
    <property type="entry name" value="Concanavalin A-like lectins/glucanases"/>
    <property type="match status" value="1"/>
</dbReference>
<dbReference type="PROSITE" id="PS00308">
    <property type="entry name" value="LECTIN_LEGUME_ALPHA"/>
    <property type="match status" value="1"/>
</dbReference>
<dbReference type="PROSITE" id="PS00307">
    <property type="entry name" value="LECTIN_LEGUME_BETA"/>
    <property type="match status" value="1"/>
</dbReference>
<reference key="1">
    <citation type="journal article" date="1991" name="FEBS Lett.">
        <title>The primary structure of the Laburnum alpinum seed lectin.</title>
        <authorList>
            <person name="Konami Y."/>
            <person name="Yamamoto K."/>
            <person name="Toyoshima S."/>
            <person name="Osawa T."/>
        </authorList>
    </citation>
    <scope>PROTEIN SEQUENCE</scope>
    <scope>GLYCOSYLATION AT ASN-119</scope>
    <source>
        <tissue>Seed</tissue>
    </source>
</reference>
<protein>
    <recommendedName>
        <fullName>Lectin 1</fullName>
    </recommendedName>
    <alternativeName>
        <fullName>LAA-I</fullName>
    </alternativeName>
    <alternativeName>
        <fullName>Lectin I</fullName>
    </alternativeName>
    <alternativeName>
        <fullName>Seed lectin anti-H(O)</fullName>
    </alternativeName>
</protein>
<feature type="chain" id="PRO_0000105089" description="Lectin 1">
    <location>
        <begin position="1"/>
        <end position="250"/>
    </location>
</feature>
<feature type="binding site" evidence="1">
    <location>
        <position position="128"/>
    </location>
    <ligand>
        <name>Mn(2+)</name>
        <dbReference type="ChEBI" id="CHEBI:29035"/>
    </ligand>
</feature>
<feature type="binding site" evidence="1">
    <location>
        <position position="130"/>
    </location>
    <ligand>
        <name>Ca(2+)</name>
        <dbReference type="ChEBI" id="CHEBI:29108"/>
    </ligand>
</feature>
<feature type="binding site" evidence="1">
    <location>
        <position position="130"/>
    </location>
    <ligand>
        <name>Mn(2+)</name>
        <dbReference type="ChEBI" id="CHEBI:29035"/>
    </ligand>
</feature>
<feature type="binding site" evidence="1">
    <location>
        <position position="132"/>
    </location>
    <ligand>
        <name>Ca(2+)</name>
        <dbReference type="ChEBI" id="CHEBI:29108"/>
    </ligand>
</feature>
<feature type="binding site" evidence="1">
    <location>
        <position position="138"/>
    </location>
    <ligand>
        <name>Ca(2+)</name>
        <dbReference type="ChEBI" id="CHEBI:29108"/>
    </ligand>
</feature>
<feature type="binding site" evidence="1">
    <location>
        <position position="141"/>
    </location>
    <ligand>
        <name>Ca(2+)</name>
        <dbReference type="ChEBI" id="CHEBI:29108"/>
    </ligand>
</feature>
<feature type="binding site" evidence="1">
    <location>
        <position position="141"/>
    </location>
    <ligand>
        <name>Mn(2+)</name>
        <dbReference type="ChEBI" id="CHEBI:29035"/>
    </ligand>
</feature>
<feature type="binding site" evidence="1">
    <location>
        <position position="146"/>
    </location>
    <ligand>
        <name>Mn(2+)</name>
        <dbReference type="ChEBI" id="CHEBI:29035"/>
    </ligand>
</feature>
<feature type="glycosylation site" description="N-linked (GlcNAc...) asparagine; partial" evidence="2">
    <location>
        <position position="119"/>
    </location>
</feature>
<sequence length="250" mass="27151">LNELSFNFDKFVPNQNNILFQGVASVSTTGVLQVTKVTNTGIKRALYAAPIHAWDDDSETGKVASFATSFSFVVKEPPIQSRKADGVDGLAFFLAPANSQIPSGSSAGMFGLFCSSDYNSSNQIIAVEFDTYFGKAYNPWDPDFKHIGVDVNSIKSIKTVKWDWRNGDVANVVITYRAPTKSLTVSLSYPSDQTSNIVTASVDLKAILPEWVSVGFSAGVGNAAKFNHDILSWYFTSNLEPNNPAVNQAQ</sequence>
<evidence type="ECO:0000250" key="1"/>
<evidence type="ECO:0000269" key="2">
    <source>
    </source>
</evidence>
<evidence type="ECO:0000305" key="3"/>
<proteinExistence type="evidence at protein level"/>
<organism>
    <name type="scientific">Laburnum alpinum</name>
    <name type="common">Scotch laburnum</name>
    <dbReference type="NCBI Taxonomy" id="3852"/>
    <lineage>
        <taxon>Eukaryota</taxon>
        <taxon>Viridiplantae</taxon>
        <taxon>Streptophyta</taxon>
        <taxon>Embryophyta</taxon>
        <taxon>Tracheophyta</taxon>
        <taxon>Spermatophyta</taxon>
        <taxon>Magnoliopsida</taxon>
        <taxon>eudicotyledons</taxon>
        <taxon>Gunneridae</taxon>
        <taxon>Pentapetalae</taxon>
        <taxon>rosids</taxon>
        <taxon>fabids</taxon>
        <taxon>Fabales</taxon>
        <taxon>Fabaceae</taxon>
        <taxon>Papilionoideae</taxon>
        <taxon>50 kb inversion clade</taxon>
        <taxon>genistoids sensu lato</taxon>
        <taxon>core genistoids</taxon>
        <taxon>Genisteae</taxon>
        <taxon>Laburnum</taxon>
    </lineage>
</organism>
<accession>P23558</accession>
<name>LEC1_LABAL</name>